<reference key="1">
    <citation type="submission" date="2008-06" db="EMBL/GenBank/DDBJ databases">
        <title>Complete sequence of Pelodictyon phaeoclathratiforme BU-1.</title>
        <authorList>
            <consortium name="US DOE Joint Genome Institute"/>
            <person name="Lucas S."/>
            <person name="Copeland A."/>
            <person name="Lapidus A."/>
            <person name="Glavina del Rio T."/>
            <person name="Dalin E."/>
            <person name="Tice H."/>
            <person name="Bruce D."/>
            <person name="Goodwin L."/>
            <person name="Pitluck S."/>
            <person name="Schmutz J."/>
            <person name="Larimer F."/>
            <person name="Land M."/>
            <person name="Hauser L."/>
            <person name="Kyrpides N."/>
            <person name="Mikhailova N."/>
            <person name="Liu Z."/>
            <person name="Li T."/>
            <person name="Zhao F."/>
            <person name="Overmann J."/>
            <person name="Bryant D.A."/>
            <person name="Richardson P."/>
        </authorList>
    </citation>
    <scope>NUCLEOTIDE SEQUENCE [LARGE SCALE GENOMIC DNA]</scope>
    <source>
        <strain>DSM 5477 / BU-1</strain>
    </source>
</reference>
<feature type="chain" id="PRO_1000139047" description="Acyl carrier protein">
    <location>
        <begin position="1"/>
        <end position="79"/>
    </location>
</feature>
<feature type="domain" description="Carrier" evidence="2">
    <location>
        <begin position="4"/>
        <end position="79"/>
    </location>
</feature>
<feature type="modified residue" description="O-(pantetheine 4'-phosphoryl)serine" evidence="2">
    <location>
        <position position="39"/>
    </location>
</feature>
<protein>
    <recommendedName>
        <fullName evidence="1">Acyl carrier protein</fullName>
        <shortName evidence="1">ACP</shortName>
    </recommendedName>
</protein>
<keyword id="KW-0963">Cytoplasm</keyword>
<keyword id="KW-0275">Fatty acid biosynthesis</keyword>
<keyword id="KW-0276">Fatty acid metabolism</keyword>
<keyword id="KW-0444">Lipid biosynthesis</keyword>
<keyword id="KW-0443">Lipid metabolism</keyword>
<keyword id="KW-0596">Phosphopantetheine</keyword>
<keyword id="KW-0597">Phosphoprotein</keyword>
<keyword id="KW-1185">Reference proteome</keyword>
<name>ACP_PELPB</name>
<evidence type="ECO:0000255" key="1">
    <source>
        <dbReference type="HAMAP-Rule" id="MF_01217"/>
    </source>
</evidence>
<evidence type="ECO:0000255" key="2">
    <source>
        <dbReference type="PROSITE-ProRule" id="PRU00258"/>
    </source>
</evidence>
<gene>
    <name evidence="1" type="primary">acpP</name>
    <name type="ordered locus">Ppha_0196</name>
</gene>
<proteinExistence type="inferred from homology"/>
<comment type="function">
    <text evidence="1">Carrier of the growing fatty acid chain in fatty acid biosynthesis.</text>
</comment>
<comment type="pathway">
    <text evidence="1">Lipid metabolism; fatty acid biosynthesis.</text>
</comment>
<comment type="subcellular location">
    <subcellularLocation>
        <location evidence="1">Cytoplasm</location>
    </subcellularLocation>
</comment>
<comment type="PTM">
    <text evidence="1">4'-phosphopantetheine is transferred from CoA to a specific serine of apo-ACP by AcpS. This modification is essential for activity because fatty acids are bound in thioester linkage to the sulfhydryl of the prosthetic group.</text>
</comment>
<comment type="similarity">
    <text evidence="1">Belongs to the acyl carrier protein (ACP) family.</text>
</comment>
<accession>B4SBB2</accession>
<sequence length="79" mass="8854">MTAAEIKDKVYDIIVSKMGVNRDQIKMESKFSDDLGADSLDTVELIMELESEFGVQIPDEDAEKIGTVQQAIDYIVNKK</sequence>
<organism>
    <name type="scientific">Pelodictyon phaeoclathratiforme (strain DSM 5477 / BU-1)</name>
    <dbReference type="NCBI Taxonomy" id="324925"/>
    <lineage>
        <taxon>Bacteria</taxon>
        <taxon>Pseudomonadati</taxon>
        <taxon>Chlorobiota</taxon>
        <taxon>Chlorobiia</taxon>
        <taxon>Chlorobiales</taxon>
        <taxon>Chlorobiaceae</taxon>
        <taxon>Chlorobium/Pelodictyon group</taxon>
        <taxon>Pelodictyon</taxon>
    </lineage>
</organism>
<dbReference type="EMBL" id="CP001110">
    <property type="protein sequence ID" value="ACF42533.1"/>
    <property type="molecule type" value="Genomic_DNA"/>
</dbReference>
<dbReference type="RefSeq" id="WP_012507029.1">
    <property type="nucleotide sequence ID" value="NC_011060.1"/>
</dbReference>
<dbReference type="SMR" id="B4SBB2"/>
<dbReference type="STRING" id="324925.Ppha_0196"/>
<dbReference type="KEGG" id="pph:Ppha_0196"/>
<dbReference type="eggNOG" id="COG0236">
    <property type="taxonomic scope" value="Bacteria"/>
</dbReference>
<dbReference type="HOGENOM" id="CLU_108696_5_1_10"/>
<dbReference type="OrthoDB" id="9804551at2"/>
<dbReference type="UniPathway" id="UPA00094"/>
<dbReference type="Proteomes" id="UP000002724">
    <property type="component" value="Chromosome"/>
</dbReference>
<dbReference type="GO" id="GO:0005829">
    <property type="term" value="C:cytosol"/>
    <property type="evidence" value="ECO:0007669"/>
    <property type="project" value="TreeGrafter"/>
</dbReference>
<dbReference type="GO" id="GO:0016020">
    <property type="term" value="C:membrane"/>
    <property type="evidence" value="ECO:0007669"/>
    <property type="project" value="GOC"/>
</dbReference>
<dbReference type="GO" id="GO:0000035">
    <property type="term" value="F:acyl binding"/>
    <property type="evidence" value="ECO:0007669"/>
    <property type="project" value="TreeGrafter"/>
</dbReference>
<dbReference type="GO" id="GO:0000036">
    <property type="term" value="F:acyl carrier activity"/>
    <property type="evidence" value="ECO:0007669"/>
    <property type="project" value="UniProtKB-UniRule"/>
</dbReference>
<dbReference type="GO" id="GO:0009245">
    <property type="term" value="P:lipid A biosynthetic process"/>
    <property type="evidence" value="ECO:0007669"/>
    <property type="project" value="TreeGrafter"/>
</dbReference>
<dbReference type="FunFam" id="1.10.1200.10:FF:000003">
    <property type="entry name" value="Acyl carrier protein"/>
    <property type="match status" value="1"/>
</dbReference>
<dbReference type="Gene3D" id="1.10.1200.10">
    <property type="entry name" value="ACP-like"/>
    <property type="match status" value="1"/>
</dbReference>
<dbReference type="HAMAP" id="MF_01217">
    <property type="entry name" value="Acyl_carrier"/>
    <property type="match status" value="1"/>
</dbReference>
<dbReference type="InterPro" id="IPR003231">
    <property type="entry name" value="ACP"/>
</dbReference>
<dbReference type="InterPro" id="IPR036736">
    <property type="entry name" value="ACP-like_sf"/>
</dbReference>
<dbReference type="InterPro" id="IPR009081">
    <property type="entry name" value="PP-bd_ACP"/>
</dbReference>
<dbReference type="InterPro" id="IPR006162">
    <property type="entry name" value="Ppantetheine_attach_site"/>
</dbReference>
<dbReference type="NCBIfam" id="TIGR00517">
    <property type="entry name" value="acyl_carrier"/>
    <property type="match status" value="1"/>
</dbReference>
<dbReference type="NCBIfam" id="NF002148">
    <property type="entry name" value="PRK00982.1-2"/>
    <property type="match status" value="1"/>
</dbReference>
<dbReference type="NCBIfam" id="NF002149">
    <property type="entry name" value="PRK00982.1-3"/>
    <property type="match status" value="1"/>
</dbReference>
<dbReference type="NCBIfam" id="NF002150">
    <property type="entry name" value="PRK00982.1-4"/>
    <property type="match status" value="1"/>
</dbReference>
<dbReference type="NCBIfam" id="NF002151">
    <property type="entry name" value="PRK00982.1-5"/>
    <property type="match status" value="1"/>
</dbReference>
<dbReference type="PANTHER" id="PTHR20863">
    <property type="entry name" value="ACYL CARRIER PROTEIN"/>
    <property type="match status" value="1"/>
</dbReference>
<dbReference type="PANTHER" id="PTHR20863:SF76">
    <property type="entry name" value="CARRIER DOMAIN-CONTAINING PROTEIN"/>
    <property type="match status" value="1"/>
</dbReference>
<dbReference type="Pfam" id="PF00550">
    <property type="entry name" value="PP-binding"/>
    <property type="match status" value="1"/>
</dbReference>
<dbReference type="SUPFAM" id="SSF47336">
    <property type="entry name" value="ACP-like"/>
    <property type="match status" value="1"/>
</dbReference>
<dbReference type="PROSITE" id="PS50075">
    <property type="entry name" value="CARRIER"/>
    <property type="match status" value="1"/>
</dbReference>
<dbReference type="PROSITE" id="PS00012">
    <property type="entry name" value="PHOSPHOPANTETHEINE"/>
    <property type="match status" value="1"/>
</dbReference>